<accession>Q2SJB9</accession>
<sequence length="127" mass="13561">MSVPHLVYVALGGALGAVSRYLIVAWVSNVAGAKFPWGTLAVNLLGSFLLGTAFVYVVEKLHGQPELRSLIMVGFLGALTTFSTFSLEAWSLMQSDQLLQGLAYILMSVILCLFAVSAGIALTRLIL</sequence>
<comment type="function">
    <text evidence="1">Fluoride-specific ion channel. Important for reducing fluoride concentration in the cell, thus reducing its toxicity.</text>
</comment>
<comment type="catalytic activity">
    <reaction evidence="1">
        <text>fluoride(in) = fluoride(out)</text>
        <dbReference type="Rhea" id="RHEA:76159"/>
        <dbReference type="ChEBI" id="CHEBI:17051"/>
    </reaction>
    <physiologicalReaction direction="left-to-right" evidence="1">
        <dbReference type="Rhea" id="RHEA:76160"/>
    </physiologicalReaction>
</comment>
<comment type="activity regulation">
    <text evidence="1">Na(+) is not transported, but it plays an essential structural role and its presence is essential for fluoride channel function.</text>
</comment>
<comment type="subcellular location">
    <subcellularLocation>
        <location evidence="1">Cell inner membrane</location>
        <topology evidence="1">Multi-pass membrane protein</topology>
    </subcellularLocation>
</comment>
<comment type="similarity">
    <text evidence="1">Belongs to the fluoride channel Fluc/FEX (TC 1.A.43) family.</text>
</comment>
<keyword id="KW-0997">Cell inner membrane</keyword>
<keyword id="KW-1003">Cell membrane</keyword>
<keyword id="KW-0407">Ion channel</keyword>
<keyword id="KW-0406">Ion transport</keyword>
<keyword id="KW-0472">Membrane</keyword>
<keyword id="KW-0479">Metal-binding</keyword>
<keyword id="KW-1185">Reference proteome</keyword>
<keyword id="KW-0915">Sodium</keyword>
<keyword id="KW-0812">Transmembrane</keyword>
<keyword id="KW-1133">Transmembrane helix</keyword>
<keyword id="KW-0813">Transport</keyword>
<reference key="1">
    <citation type="journal article" date="2005" name="Nucleic Acids Res.">
        <title>Genomic blueprint of Hahella chejuensis, a marine microbe producing an algicidal agent.</title>
        <authorList>
            <person name="Jeong H."/>
            <person name="Yim J.H."/>
            <person name="Lee C."/>
            <person name="Choi S.-H."/>
            <person name="Park Y.K."/>
            <person name="Yoon S.H."/>
            <person name="Hur C.-G."/>
            <person name="Kang H.-Y."/>
            <person name="Kim D."/>
            <person name="Lee H.H."/>
            <person name="Park K.H."/>
            <person name="Park S.-H."/>
            <person name="Park H.-S."/>
            <person name="Lee H.K."/>
            <person name="Oh T.K."/>
            <person name="Kim J.F."/>
        </authorList>
    </citation>
    <scope>NUCLEOTIDE SEQUENCE [LARGE SCALE GENOMIC DNA]</scope>
    <source>
        <strain>KCTC 2396</strain>
    </source>
</reference>
<organism>
    <name type="scientific">Hahella chejuensis (strain KCTC 2396)</name>
    <dbReference type="NCBI Taxonomy" id="349521"/>
    <lineage>
        <taxon>Bacteria</taxon>
        <taxon>Pseudomonadati</taxon>
        <taxon>Pseudomonadota</taxon>
        <taxon>Gammaproteobacteria</taxon>
        <taxon>Oceanospirillales</taxon>
        <taxon>Hahellaceae</taxon>
        <taxon>Hahella</taxon>
    </lineage>
</organism>
<gene>
    <name evidence="1" type="primary">fluC</name>
    <name evidence="1" type="synonym">crcB</name>
    <name type="ordered locus">HCH_02448</name>
</gene>
<name>FLUC_HAHCH</name>
<dbReference type="EMBL" id="CP000155">
    <property type="protein sequence ID" value="ABC29255.1"/>
    <property type="molecule type" value="Genomic_DNA"/>
</dbReference>
<dbReference type="RefSeq" id="WP_011396324.1">
    <property type="nucleotide sequence ID" value="NC_007645.1"/>
</dbReference>
<dbReference type="SMR" id="Q2SJB9"/>
<dbReference type="STRING" id="349521.HCH_02448"/>
<dbReference type="KEGG" id="hch:HCH_02448"/>
<dbReference type="eggNOG" id="COG0239">
    <property type="taxonomic scope" value="Bacteria"/>
</dbReference>
<dbReference type="HOGENOM" id="CLU_114342_2_3_6"/>
<dbReference type="OrthoDB" id="9806299at2"/>
<dbReference type="Proteomes" id="UP000000238">
    <property type="component" value="Chromosome"/>
</dbReference>
<dbReference type="GO" id="GO:0005886">
    <property type="term" value="C:plasma membrane"/>
    <property type="evidence" value="ECO:0007669"/>
    <property type="project" value="UniProtKB-SubCell"/>
</dbReference>
<dbReference type="GO" id="GO:0062054">
    <property type="term" value="F:fluoride channel activity"/>
    <property type="evidence" value="ECO:0007669"/>
    <property type="project" value="UniProtKB-UniRule"/>
</dbReference>
<dbReference type="GO" id="GO:0046872">
    <property type="term" value="F:metal ion binding"/>
    <property type="evidence" value="ECO:0007669"/>
    <property type="project" value="UniProtKB-KW"/>
</dbReference>
<dbReference type="GO" id="GO:0140114">
    <property type="term" value="P:cellular detoxification of fluoride"/>
    <property type="evidence" value="ECO:0007669"/>
    <property type="project" value="UniProtKB-UniRule"/>
</dbReference>
<dbReference type="HAMAP" id="MF_00454">
    <property type="entry name" value="FluC"/>
    <property type="match status" value="1"/>
</dbReference>
<dbReference type="InterPro" id="IPR003691">
    <property type="entry name" value="FluC"/>
</dbReference>
<dbReference type="NCBIfam" id="TIGR00494">
    <property type="entry name" value="crcB"/>
    <property type="match status" value="1"/>
</dbReference>
<dbReference type="PANTHER" id="PTHR28259">
    <property type="entry name" value="FLUORIDE EXPORT PROTEIN 1-RELATED"/>
    <property type="match status" value="1"/>
</dbReference>
<dbReference type="PANTHER" id="PTHR28259:SF1">
    <property type="entry name" value="FLUORIDE EXPORT PROTEIN 1-RELATED"/>
    <property type="match status" value="1"/>
</dbReference>
<dbReference type="Pfam" id="PF02537">
    <property type="entry name" value="CRCB"/>
    <property type="match status" value="1"/>
</dbReference>
<protein>
    <recommendedName>
        <fullName evidence="1">Fluoride-specific ion channel FluC</fullName>
    </recommendedName>
</protein>
<evidence type="ECO:0000255" key="1">
    <source>
        <dbReference type="HAMAP-Rule" id="MF_00454"/>
    </source>
</evidence>
<proteinExistence type="inferred from homology"/>
<feature type="chain" id="PRO_0000252887" description="Fluoride-specific ion channel FluC">
    <location>
        <begin position="1"/>
        <end position="127"/>
    </location>
</feature>
<feature type="transmembrane region" description="Helical" evidence="1">
    <location>
        <begin position="7"/>
        <end position="27"/>
    </location>
</feature>
<feature type="transmembrane region" description="Helical" evidence="1">
    <location>
        <begin position="38"/>
        <end position="58"/>
    </location>
</feature>
<feature type="transmembrane region" description="Helical" evidence="1">
    <location>
        <begin position="70"/>
        <end position="90"/>
    </location>
</feature>
<feature type="transmembrane region" description="Helical" evidence="1">
    <location>
        <begin position="102"/>
        <end position="122"/>
    </location>
</feature>
<feature type="binding site" evidence="1">
    <location>
        <position position="77"/>
    </location>
    <ligand>
        <name>Na(+)</name>
        <dbReference type="ChEBI" id="CHEBI:29101"/>
        <note>structural</note>
    </ligand>
</feature>
<feature type="binding site" evidence="1">
    <location>
        <position position="80"/>
    </location>
    <ligand>
        <name>Na(+)</name>
        <dbReference type="ChEBI" id="CHEBI:29101"/>
        <note>structural</note>
    </ligand>
</feature>